<evidence type="ECO:0000255" key="1">
    <source>
        <dbReference type="PROSITE-ProRule" id="PRU00457"/>
    </source>
</evidence>
<evidence type="ECO:0000305" key="2"/>
<sequence>MRRTFTAEEKASVFELWKNGTGFSEIANILGSKPGTIFTMLRDTGGIKPHERKRAVAHLTLSEREEIRAGLSAKMSIRAIATALNRSPSTISREVQRNRGRRYYKAVDANNRANRMAKRPKPCLLDQNLPLRKLVLEKLEMKWSPEQISGWLRRTKPRQKTLRISPETIYKTLYFRSREALHHLNIQHLRRSHSLRHGRRHTRKGERGTINIVNGTPIHERSRNIDNRRSLGHWEGDLVSGTKNSHIATLVDRKSRYTIILRLRGKDSVSVNQALTDKFLSLPSELRKSLTWDRGMELARHLEFTVSTGVKVYFCDPQSPWQRGTNENTNGLIRQYFPKKTCLAQYTQHELDLVAAQLNNRPRKTLKFKTPKEIIERGVALTD</sequence>
<gene>
    <name type="primary">insI3</name>
    <name type="ordered locus">b1404</name>
    <name type="ordered locus">JW1401</name>
</gene>
<feature type="chain" id="PRO_0000394135" description="Transposase InsI for insertion sequence element IS30C">
    <location>
        <begin position="1"/>
        <end position="383"/>
    </location>
</feature>
<feature type="domain" description="Integrase catalytic" evidence="1">
    <location>
        <begin position="213"/>
        <end position="379"/>
    </location>
</feature>
<protein>
    <recommendedName>
        <fullName>Transposase InsI for insertion sequence element IS30C</fullName>
    </recommendedName>
</protein>
<dbReference type="EMBL" id="X00792">
    <property type="protein sequence ID" value="CAA25376.1"/>
    <property type="molecule type" value="Genomic_DNA"/>
</dbReference>
<dbReference type="EMBL" id="U00096">
    <property type="protein sequence ID" value="AAC74486.1"/>
    <property type="molecule type" value="Genomic_DNA"/>
</dbReference>
<dbReference type="EMBL" id="AP009048">
    <property type="protein sequence ID" value="BAA15014.1"/>
    <property type="molecule type" value="Genomic_DNA"/>
</dbReference>
<dbReference type="PIR" id="F65241">
    <property type="entry name" value="F65241"/>
</dbReference>
<dbReference type="RefSeq" id="NP_418704.1">
    <property type="nucleotide sequence ID" value="NC_000913.3"/>
</dbReference>
<dbReference type="RefSeq" id="WP_001254932.1">
    <property type="nucleotide sequence ID" value="NZ_SSUR01000046.1"/>
</dbReference>
<dbReference type="RefSeq" id="YP_001294740.1">
    <property type="nucleotide sequence ID" value="NC_009602.1"/>
</dbReference>
<dbReference type="FunCoup" id="P0CF89">
    <property type="interactions" value="26"/>
</dbReference>
<dbReference type="STRING" id="511145.b1404"/>
<dbReference type="PaxDb" id="511145-b1404"/>
<dbReference type="EnsemblBacteria" id="AAC74486">
    <property type="protein sequence ID" value="AAC74486"/>
    <property type="gene ID" value="b1404"/>
</dbReference>
<dbReference type="GeneID" id="948815"/>
<dbReference type="KEGG" id="ecj:JW1401"/>
<dbReference type="KEGG" id="eco:b1404"/>
<dbReference type="KEGG" id="eco:b4284"/>
<dbReference type="KEGG" id="ecoc:C3026_23100"/>
<dbReference type="EchoBASE" id="EB4755"/>
<dbReference type="eggNOG" id="COG2826">
    <property type="taxonomic scope" value="Bacteria"/>
</dbReference>
<dbReference type="HOGENOM" id="CLU_035706_0_0_6"/>
<dbReference type="InParanoid" id="P0CF89"/>
<dbReference type="OMA" id="MWERWRK"/>
<dbReference type="OrthoDB" id="9803231at2"/>
<dbReference type="PhylomeDB" id="P0CF89"/>
<dbReference type="BioCyc" id="EcoCyc:G6725-MONOMER"/>
<dbReference type="PRO" id="PR:P0CF89"/>
<dbReference type="Proteomes" id="UP000000625">
    <property type="component" value="Chromosome"/>
</dbReference>
<dbReference type="GO" id="GO:0003677">
    <property type="term" value="F:DNA binding"/>
    <property type="evidence" value="ECO:0007669"/>
    <property type="project" value="UniProtKB-KW"/>
</dbReference>
<dbReference type="GO" id="GO:0004803">
    <property type="term" value="F:transposase activity"/>
    <property type="evidence" value="ECO:0000314"/>
    <property type="project" value="EcoCyc"/>
</dbReference>
<dbReference type="GO" id="GO:0015074">
    <property type="term" value="P:DNA integration"/>
    <property type="evidence" value="ECO:0007669"/>
    <property type="project" value="InterPro"/>
</dbReference>
<dbReference type="GO" id="GO:0006313">
    <property type="term" value="P:DNA transposition"/>
    <property type="evidence" value="ECO:0007669"/>
    <property type="project" value="InterPro"/>
</dbReference>
<dbReference type="GO" id="GO:0032196">
    <property type="term" value="P:transposition"/>
    <property type="evidence" value="ECO:0000314"/>
    <property type="project" value="EcoCyc"/>
</dbReference>
<dbReference type="FunFam" id="3.30.420.10:FF:000038">
    <property type="entry name" value="IS30-like element IS30 family transposase"/>
    <property type="match status" value="1"/>
</dbReference>
<dbReference type="Gene3D" id="1.10.10.60">
    <property type="entry name" value="Homeodomain-like"/>
    <property type="match status" value="1"/>
</dbReference>
<dbReference type="Gene3D" id="3.30.420.10">
    <property type="entry name" value="Ribonuclease H-like superfamily/Ribonuclease H"/>
    <property type="match status" value="1"/>
</dbReference>
<dbReference type="InterPro" id="IPR001584">
    <property type="entry name" value="Integrase_cat-core"/>
</dbReference>
<dbReference type="InterPro" id="IPR025246">
    <property type="entry name" value="IS30-like_HTH"/>
</dbReference>
<dbReference type="InterPro" id="IPR012337">
    <property type="entry name" value="RNaseH-like_sf"/>
</dbReference>
<dbReference type="InterPro" id="IPR036397">
    <property type="entry name" value="RNaseH_sf"/>
</dbReference>
<dbReference type="InterPro" id="IPR051917">
    <property type="entry name" value="Transposase-Integrase"/>
</dbReference>
<dbReference type="InterPro" id="IPR053392">
    <property type="entry name" value="Transposase_IS30-like"/>
</dbReference>
<dbReference type="InterPro" id="IPR001598">
    <property type="entry name" value="Transposase_IS30_CS"/>
</dbReference>
<dbReference type="NCBIfam" id="NF033563">
    <property type="entry name" value="transpos_IS30"/>
    <property type="match status" value="1"/>
</dbReference>
<dbReference type="PANTHER" id="PTHR10948">
    <property type="entry name" value="TRANSPOSASE"/>
    <property type="match status" value="1"/>
</dbReference>
<dbReference type="PANTHER" id="PTHR10948:SF23">
    <property type="entry name" value="TRANSPOSASE INSI FOR INSERTION SEQUENCE ELEMENT IS30A-RELATED"/>
    <property type="match status" value="1"/>
</dbReference>
<dbReference type="Pfam" id="PF13936">
    <property type="entry name" value="HTH_38"/>
    <property type="match status" value="1"/>
</dbReference>
<dbReference type="Pfam" id="PF00665">
    <property type="entry name" value="rve"/>
    <property type="match status" value="1"/>
</dbReference>
<dbReference type="SUPFAM" id="SSF53098">
    <property type="entry name" value="Ribonuclease H-like"/>
    <property type="match status" value="1"/>
</dbReference>
<dbReference type="PROSITE" id="PS50994">
    <property type="entry name" value="INTEGRASE"/>
    <property type="match status" value="1"/>
</dbReference>
<dbReference type="PROSITE" id="PS01043">
    <property type="entry name" value="TRANSPOSASE_IS30"/>
    <property type="match status" value="1"/>
</dbReference>
<accession>P0CF89</accession>
<accession>P37246</accession>
<accession>P77341</accession>
<accession>Q2M630</accession>
<accession>Q2MCF8</accession>
<organism>
    <name type="scientific">Escherichia coli (strain K12)</name>
    <dbReference type="NCBI Taxonomy" id="83333"/>
    <lineage>
        <taxon>Bacteria</taxon>
        <taxon>Pseudomonadati</taxon>
        <taxon>Pseudomonadota</taxon>
        <taxon>Gammaproteobacteria</taxon>
        <taxon>Enterobacterales</taxon>
        <taxon>Enterobacteriaceae</taxon>
        <taxon>Escherichia</taxon>
    </lineage>
</organism>
<proteinExistence type="inferred from homology"/>
<reference key="1">
    <citation type="journal article" date="1984" name="EMBO J.">
        <title>Nucleotide sequence of the prokaryotic mobile genetic element IS30.</title>
        <authorList>
            <person name="Dalrymple B."/>
            <person name="Caspers P."/>
            <person name="Arber W."/>
        </authorList>
    </citation>
    <scope>NUCLEOTIDE SEQUENCE [GENOMIC DNA]</scope>
    <source>
        <strain>K12</strain>
    </source>
</reference>
<reference key="2">
    <citation type="journal article" date="1996" name="DNA Res.">
        <title>A 570-kb DNA sequence of the Escherichia coli K-12 genome corresponding to the 28.0-40.1 min region on the linkage map.</title>
        <authorList>
            <person name="Aiba H."/>
            <person name="Baba T."/>
            <person name="Fujita K."/>
            <person name="Hayashi K."/>
            <person name="Inada T."/>
            <person name="Isono K."/>
            <person name="Itoh T."/>
            <person name="Kasai H."/>
            <person name="Kashimoto K."/>
            <person name="Kimura S."/>
            <person name="Kitakawa M."/>
            <person name="Kitagawa M."/>
            <person name="Makino K."/>
            <person name="Miki T."/>
            <person name="Mizobuchi K."/>
            <person name="Mori H."/>
            <person name="Mori T."/>
            <person name="Motomura K."/>
            <person name="Nakade S."/>
            <person name="Nakamura Y."/>
            <person name="Nashimoto H."/>
            <person name="Nishio Y."/>
            <person name="Oshima T."/>
            <person name="Saito N."/>
            <person name="Sampei G."/>
            <person name="Seki Y."/>
            <person name="Sivasundaram S."/>
            <person name="Tagami H."/>
            <person name="Takeda J."/>
            <person name="Takemoto K."/>
            <person name="Takeuchi Y."/>
            <person name="Wada C."/>
            <person name="Yamamoto Y."/>
            <person name="Horiuchi T."/>
        </authorList>
    </citation>
    <scope>NUCLEOTIDE SEQUENCE [LARGE SCALE GENOMIC DNA]</scope>
    <source>
        <strain>K12 / W3110 / ATCC 27325 / DSM 5911</strain>
    </source>
</reference>
<reference key="3">
    <citation type="journal article" date="1997" name="Science">
        <title>The complete genome sequence of Escherichia coli K-12.</title>
        <authorList>
            <person name="Blattner F.R."/>
            <person name="Plunkett G. III"/>
            <person name="Bloch C.A."/>
            <person name="Perna N.T."/>
            <person name="Burland V."/>
            <person name="Riley M."/>
            <person name="Collado-Vides J."/>
            <person name="Glasner J.D."/>
            <person name="Rode C.K."/>
            <person name="Mayhew G.F."/>
            <person name="Gregor J."/>
            <person name="Davis N.W."/>
            <person name="Kirkpatrick H.A."/>
            <person name="Goeden M.A."/>
            <person name="Rose D.J."/>
            <person name="Mau B."/>
            <person name="Shao Y."/>
        </authorList>
    </citation>
    <scope>NUCLEOTIDE SEQUENCE [LARGE SCALE GENOMIC DNA]</scope>
    <source>
        <strain>K12 / MG1655 / ATCC 47076</strain>
    </source>
</reference>
<reference key="4">
    <citation type="journal article" date="2006" name="Mol. Syst. Biol.">
        <title>Highly accurate genome sequences of Escherichia coli K-12 strains MG1655 and W3110.</title>
        <authorList>
            <person name="Hayashi K."/>
            <person name="Morooka N."/>
            <person name="Yamamoto Y."/>
            <person name="Fujita K."/>
            <person name="Isono K."/>
            <person name="Choi S."/>
            <person name="Ohtsubo E."/>
            <person name="Baba T."/>
            <person name="Wanner B.L."/>
            <person name="Mori H."/>
            <person name="Horiuchi T."/>
        </authorList>
    </citation>
    <scope>NUCLEOTIDE SEQUENCE [LARGE SCALE GENOMIC DNA]</scope>
    <source>
        <strain>K12 / W3110 / ATCC 27325 / DSM 5911</strain>
    </source>
</reference>
<comment type="function">
    <text evidence="2">Required for the transposition of the insertion element.</text>
</comment>
<comment type="similarity">
    <text evidence="2">Belongs to the transposase IS30 family.</text>
</comment>
<name>INSI3_ECOLI</name>
<keyword id="KW-0233">DNA recombination</keyword>
<keyword id="KW-0238">DNA-binding</keyword>
<keyword id="KW-1185">Reference proteome</keyword>
<keyword id="KW-0814">Transposable element</keyword>
<keyword id="KW-0815">Transposition</keyword>